<comment type="function">
    <text evidence="1">Catalyzes the radical-mediated insertion of two sulfur atoms into the C-6 and C-8 positions of the octanoyl moiety bound to the lipoyl domains of lipoate-dependent enzymes, thereby converting the octanoylated domains into lipoylated derivatives.</text>
</comment>
<comment type="catalytic activity">
    <reaction evidence="1">
        <text>[[Fe-S] cluster scaffold protein carrying a second [4Fe-4S](2+) cluster] + N(6)-octanoyl-L-lysyl-[protein] + 2 oxidized [2Fe-2S]-[ferredoxin] + 2 S-adenosyl-L-methionine + 4 H(+) = [[Fe-S] cluster scaffold protein] + N(6)-[(R)-dihydrolipoyl]-L-lysyl-[protein] + 4 Fe(3+) + 2 hydrogen sulfide + 2 5'-deoxyadenosine + 2 L-methionine + 2 reduced [2Fe-2S]-[ferredoxin]</text>
        <dbReference type="Rhea" id="RHEA:16585"/>
        <dbReference type="Rhea" id="RHEA-COMP:9928"/>
        <dbReference type="Rhea" id="RHEA-COMP:10000"/>
        <dbReference type="Rhea" id="RHEA-COMP:10001"/>
        <dbReference type="Rhea" id="RHEA-COMP:10475"/>
        <dbReference type="Rhea" id="RHEA-COMP:14568"/>
        <dbReference type="Rhea" id="RHEA-COMP:14569"/>
        <dbReference type="ChEBI" id="CHEBI:15378"/>
        <dbReference type="ChEBI" id="CHEBI:17319"/>
        <dbReference type="ChEBI" id="CHEBI:29034"/>
        <dbReference type="ChEBI" id="CHEBI:29919"/>
        <dbReference type="ChEBI" id="CHEBI:33722"/>
        <dbReference type="ChEBI" id="CHEBI:33737"/>
        <dbReference type="ChEBI" id="CHEBI:33738"/>
        <dbReference type="ChEBI" id="CHEBI:57844"/>
        <dbReference type="ChEBI" id="CHEBI:59789"/>
        <dbReference type="ChEBI" id="CHEBI:78809"/>
        <dbReference type="ChEBI" id="CHEBI:83100"/>
        <dbReference type="EC" id="2.8.1.8"/>
    </reaction>
</comment>
<comment type="cofactor">
    <cofactor evidence="1">
        <name>[4Fe-4S] cluster</name>
        <dbReference type="ChEBI" id="CHEBI:49883"/>
    </cofactor>
    <text evidence="1">Binds 2 [4Fe-4S] clusters per subunit. One cluster is coordinated with 3 cysteines and an exchangeable S-adenosyl-L-methionine.</text>
</comment>
<comment type="pathway">
    <text evidence="1">Protein modification; protein lipoylation via endogenous pathway; protein N(6)-(lipoyl)lysine from octanoyl-[acyl-carrier-protein]: step 2/2.</text>
</comment>
<comment type="subcellular location">
    <subcellularLocation>
        <location evidence="1">Cytoplasm</location>
    </subcellularLocation>
</comment>
<comment type="similarity">
    <text evidence="1">Belongs to the radical SAM superfamily. Lipoyl synthase family.</text>
</comment>
<keyword id="KW-0004">4Fe-4S</keyword>
<keyword id="KW-0963">Cytoplasm</keyword>
<keyword id="KW-0408">Iron</keyword>
<keyword id="KW-0411">Iron-sulfur</keyword>
<keyword id="KW-0479">Metal-binding</keyword>
<keyword id="KW-1185">Reference proteome</keyword>
<keyword id="KW-0949">S-adenosyl-L-methionine</keyword>
<keyword id="KW-0808">Transferase</keyword>
<evidence type="ECO:0000255" key="1">
    <source>
        <dbReference type="HAMAP-Rule" id="MF_00206"/>
    </source>
</evidence>
<evidence type="ECO:0000255" key="2">
    <source>
        <dbReference type="PROSITE-ProRule" id="PRU01266"/>
    </source>
</evidence>
<evidence type="ECO:0000256" key="3">
    <source>
        <dbReference type="SAM" id="MobiDB-lite"/>
    </source>
</evidence>
<accession>Q88DM5</accession>
<reference key="1">
    <citation type="journal article" date="2002" name="Environ. Microbiol.">
        <title>Complete genome sequence and comparative analysis of the metabolically versatile Pseudomonas putida KT2440.</title>
        <authorList>
            <person name="Nelson K.E."/>
            <person name="Weinel C."/>
            <person name="Paulsen I.T."/>
            <person name="Dodson R.J."/>
            <person name="Hilbert H."/>
            <person name="Martins dos Santos V.A.P."/>
            <person name="Fouts D.E."/>
            <person name="Gill S.R."/>
            <person name="Pop M."/>
            <person name="Holmes M."/>
            <person name="Brinkac L.M."/>
            <person name="Beanan M.J."/>
            <person name="DeBoy R.T."/>
            <person name="Daugherty S.C."/>
            <person name="Kolonay J.F."/>
            <person name="Madupu R."/>
            <person name="Nelson W.C."/>
            <person name="White O."/>
            <person name="Peterson J.D."/>
            <person name="Khouri H.M."/>
            <person name="Hance I."/>
            <person name="Chris Lee P."/>
            <person name="Holtzapple E.K."/>
            <person name="Scanlan D."/>
            <person name="Tran K."/>
            <person name="Moazzez A."/>
            <person name="Utterback T.R."/>
            <person name="Rizzo M."/>
            <person name="Lee K."/>
            <person name="Kosack D."/>
            <person name="Moestl D."/>
            <person name="Wedler H."/>
            <person name="Lauber J."/>
            <person name="Stjepandic D."/>
            <person name="Hoheisel J."/>
            <person name="Straetz M."/>
            <person name="Heim S."/>
            <person name="Kiewitz C."/>
            <person name="Eisen J.A."/>
            <person name="Timmis K.N."/>
            <person name="Duesterhoeft A."/>
            <person name="Tuemmler B."/>
            <person name="Fraser C.M."/>
        </authorList>
    </citation>
    <scope>NUCLEOTIDE SEQUENCE [LARGE SCALE GENOMIC DNA]</scope>
    <source>
        <strain>ATCC 47054 / DSM 6125 / CFBP 8728 / NCIMB 11950 / KT2440</strain>
    </source>
</reference>
<gene>
    <name evidence="1" type="primary">lipA</name>
    <name type="ordered locus">PP_4800</name>
</gene>
<organism>
    <name type="scientific">Pseudomonas putida (strain ATCC 47054 / DSM 6125 / CFBP 8728 / NCIMB 11950 / KT2440)</name>
    <dbReference type="NCBI Taxonomy" id="160488"/>
    <lineage>
        <taxon>Bacteria</taxon>
        <taxon>Pseudomonadati</taxon>
        <taxon>Pseudomonadota</taxon>
        <taxon>Gammaproteobacteria</taxon>
        <taxon>Pseudomonadales</taxon>
        <taxon>Pseudomonadaceae</taxon>
        <taxon>Pseudomonas</taxon>
    </lineage>
</organism>
<name>LIPA_PSEPK</name>
<feature type="chain" id="PRO_0000102343" description="Lipoyl synthase">
    <location>
        <begin position="1"/>
        <end position="338"/>
    </location>
</feature>
<feature type="domain" description="Radical SAM core" evidence="2">
    <location>
        <begin position="96"/>
        <end position="313"/>
    </location>
</feature>
<feature type="region of interest" description="Disordered" evidence="3">
    <location>
        <begin position="1"/>
        <end position="24"/>
    </location>
</feature>
<feature type="binding site" evidence="1">
    <location>
        <position position="84"/>
    </location>
    <ligand>
        <name>[4Fe-4S] cluster</name>
        <dbReference type="ChEBI" id="CHEBI:49883"/>
        <label>1</label>
    </ligand>
</feature>
<feature type="binding site" evidence="1">
    <location>
        <position position="89"/>
    </location>
    <ligand>
        <name>[4Fe-4S] cluster</name>
        <dbReference type="ChEBI" id="CHEBI:49883"/>
        <label>1</label>
    </ligand>
</feature>
<feature type="binding site" evidence="1">
    <location>
        <position position="95"/>
    </location>
    <ligand>
        <name>[4Fe-4S] cluster</name>
        <dbReference type="ChEBI" id="CHEBI:49883"/>
        <label>1</label>
    </ligand>
</feature>
<feature type="binding site" evidence="1">
    <location>
        <position position="110"/>
    </location>
    <ligand>
        <name>[4Fe-4S] cluster</name>
        <dbReference type="ChEBI" id="CHEBI:49883"/>
        <label>2</label>
        <note>4Fe-4S-S-AdoMet</note>
    </ligand>
</feature>
<feature type="binding site" evidence="1">
    <location>
        <position position="114"/>
    </location>
    <ligand>
        <name>[4Fe-4S] cluster</name>
        <dbReference type="ChEBI" id="CHEBI:49883"/>
        <label>2</label>
        <note>4Fe-4S-S-AdoMet</note>
    </ligand>
</feature>
<feature type="binding site" evidence="1">
    <location>
        <position position="117"/>
    </location>
    <ligand>
        <name>[4Fe-4S] cluster</name>
        <dbReference type="ChEBI" id="CHEBI:49883"/>
        <label>2</label>
        <note>4Fe-4S-S-AdoMet</note>
    </ligand>
</feature>
<feature type="binding site" evidence="1">
    <location>
        <position position="324"/>
    </location>
    <ligand>
        <name>[4Fe-4S] cluster</name>
        <dbReference type="ChEBI" id="CHEBI:49883"/>
        <label>1</label>
    </ligand>
</feature>
<sequence>MTTVQEAVPNLIPTQDATPRPAPKKVEAGVKLRGADKVARIPVKIIPTDELPKKPDWIRVRIPVSPEVDRIKQLLRKHKLHSVCEEASCPNLGECFSGGTATFMIMGDICTRRCPFCDVGHGRPKPLDLDEPKNLAVAIADLRLKYVVITSVDRDDLRDGGAQHFADCIREIRALSPGVQLETLVPDYRGRMDVALEITAQEPPDVFNHNLETVPRLYKAARPGSDYDWSLDLLQKFKQLVPHVPTKSGLMLGLGETDEEVIEVMHRMREHDIDMLTLGQYLQPSRSHLPVQRFVHPDTFAWFAEEGYKMGFKNVASGPLVRSSYHADQQAHEAKIKL</sequence>
<protein>
    <recommendedName>
        <fullName evidence="1">Lipoyl synthase</fullName>
        <ecNumber evidence="1">2.8.1.8</ecNumber>
    </recommendedName>
    <alternativeName>
        <fullName evidence="1">Lip-syn</fullName>
        <shortName evidence="1">LS</shortName>
    </alternativeName>
    <alternativeName>
        <fullName evidence="1">Lipoate synthase</fullName>
    </alternativeName>
    <alternativeName>
        <fullName evidence="1">Lipoic acid synthase</fullName>
    </alternativeName>
    <alternativeName>
        <fullName evidence="1">Sulfur insertion protein LipA</fullName>
    </alternativeName>
</protein>
<dbReference type="EC" id="2.8.1.8" evidence="1"/>
<dbReference type="EMBL" id="AE015451">
    <property type="protein sequence ID" value="AAN70369.1"/>
    <property type="molecule type" value="Genomic_DNA"/>
</dbReference>
<dbReference type="RefSeq" id="NP_746905.1">
    <property type="nucleotide sequence ID" value="NC_002947.4"/>
</dbReference>
<dbReference type="RefSeq" id="WP_003249742.1">
    <property type="nucleotide sequence ID" value="NZ_CP169744.1"/>
</dbReference>
<dbReference type="SMR" id="Q88DM5"/>
<dbReference type="STRING" id="160488.PP_4800"/>
<dbReference type="PaxDb" id="160488-PP_4800"/>
<dbReference type="GeneID" id="83682526"/>
<dbReference type="KEGG" id="ppu:PP_4800"/>
<dbReference type="PATRIC" id="fig|160488.4.peg.5122"/>
<dbReference type="eggNOG" id="COG0320">
    <property type="taxonomic scope" value="Bacteria"/>
</dbReference>
<dbReference type="HOGENOM" id="CLU_033144_2_1_6"/>
<dbReference type="OrthoDB" id="9787898at2"/>
<dbReference type="PhylomeDB" id="Q88DM5"/>
<dbReference type="BioCyc" id="PPUT160488:G1G01-5137-MONOMER"/>
<dbReference type="UniPathway" id="UPA00538">
    <property type="reaction ID" value="UER00593"/>
</dbReference>
<dbReference type="Proteomes" id="UP000000556">
    <property type="component" value="Chromosome"/>
</dbReference>
<dbReference type="GO" id="GO:0005737">
    <property type="term" value="C:cytoplasm"/>
    <property type="evidence" value="ECO:0007669"/>
    <property type="project" value="UniProtKB-SubCell"/>
</dbReference>
<dbReference type="GO" id="GO:0051539">
    <property type="term" value="F:4 iron, 4 sulfur cluster binding"/>
    <property type="evidence" value="ECO:0007669"/>
    <property type="project" value="UniProtKB-UniRule"/>
</dbReference>
<dbReference type="GO" id="GO:0016992">
    <property type="term" value="F:lipoate synthase activity"/>
    <property type="evidence" value="ECO:0007669"/>
    <property type="project" value="UniProtKB-UniRule"/>
</dbReference>
<dbReference type="GO" id="GO:0046872">
    <property type="term" value="F:metal ion binding"/>
    <property type="evidence" value="ECO:0007669"/>
    <property type="project" value="UniProtKB-KW"/>
</dbReference>
<dbReference type="CDD" id="cd01335">
    <property type="entry name" value="Radical_SAM"/>
    <property type="match status" value="1"/>
</dbReference>
<dbReference type="FunFam" id="3.20.20.70:FF:000023">
    <property type="entry name" value="Lipoyl synthase"/>
    <property type="match status" value="1"/>
</dbReference>
<dbReference type="Gene3D" id="3.20.20.70">
    <property type="entry name" value="Aldolase class I"/>
    <property type="match status" value="1"/>
</dbReference>
<dbReference type="HAMAP" id="MF_00206">
    <property type="entry name" value="Lipoyl_synth"/>
    <property type="match status" value="1"/>
</dbReference>
<dbReference type="InterPro" id="IPR013785">
    <property type="entry name" value="Aldolase_TIM"/>
</dbReference>
<dbReference type="InterPro" id="IPR006638">
    <property type="entry name" value="Elp3/MiaA/NifB-like_rSAM"/>
</dbReference>
<dbReference type="InterPro" id="IPR031691">
    <property type="entry name" value="LIAS_N"/>
</dbReference>
<dbReference type="InterPro" id="IPR003698">
    <property type="entry name" value="Lipoyl_synth"/>
</dbReference>
<dbReference type="InterPro" id="IPR007197">
    <property type="entry name" value="rSAM"/>
</dbReference>
<dbReference type="NCBIfam" id="TIGR00510">
    <property type="entry name" value="lipA"/>
    <property type="match status" value="1"/>
</dbReference>
<dbReference type="NCBIfam" id="NF004019">
    <property type="entry name" value="PRK05481.1"/>
    <property type="match status" value="1"/>
</dbReference>
<dbReference type="NCBIfam" id="NF009544">
    <property type="entry name" value="PRK12928.1"/>
    <property type="match status" value="1"/>
</dbReference>
<dbReference type="PANTHER" id="PTHR10949">
    <property type="entry name" value="LIPOYL SYNTHASE"/>
    <property type="match status" value="1"/>
</dbReference>
<dbReference type="PANTHER" id="PTHR10949:SF0">
    <property type="entry name" value="LIPOYL SYNTHASE, MITOCHONDRIAL"/>
    <property type="match status" value="1"/>
</dbReference>
<dbReference type="Pfam" id="PF16881">
    <property type="entry name" value="LIAS_N"/>
    <property type="match status" value="1"/>
</dbReference>
<dbReference type="Pfam" id="PF04055">
    <property type="entry name" value="Radical_SAM"/>
    <property type="match status" value="1"/>
</dbReference>
<dbReference type="PIRSF" id="PIRSF005963">
    <property type="entry name" value="Lipoyl_synth"/>
    <property type="match status" value="1"/>
</dbReference>
<dbReference type="SFLD" id="SFLDF00271">
    <property type="entry name" value="lipoyl_synthase"/>
    <property type="match status" value="1"/>
</dbReference>
<dbReference type="SFLD" id="SFLDG01058">
    <property type="entry name" value="lipoyl_synthase_like"/>
    <property type="match status" value="1"/>
</dbReference>
<dbReference type="SMART" id="SM00729">
    <property type="entry name" value="Elp3"/>
    <property type="match status" value="1"/>
</dbReference>
<dbReference type="SUPFAM" id="SSF102114">
    <property type="entry name" value="Radical SAM enzymes"/>
    <property type="match status" value="1"/>
</dbReference>
<dbReference type="PROSITE" id="PS51918">
    <property type="entry name" value="RADICAL_SAM"/>
    <property type="match status" value="1"/>
</dbReference>
<proteinExistence type="inferred from homology"/>